<comment type="function">
    <text evidence="1">The secreted form is a binding and antagonizing protein for members of the TGF-beta family, such as activin, BMP2 and MSTN. Inhibits activin A-, activin B-, BMP2- and MSDT-induced cellular signaling; more effective on activin A than on activin B. Involved in bone formation; inhibits osteoclast differentiation. Involved in hematopoiesis; involved in differentiation of hemopoietic progenitor cells, increases hematopoietic cell adhesion to fibronectin and seems to contribute to the adhesion of hematopoietic precursor cells to the bone marrow stroma. The nuclear form is probably involved in transcriptional regulation via interaction with MLLT10 (By similarity).</text>
</comment>
<comment type="subunit">
    <text evidence="1">Interacts with INHBA and INHBB. Interacts with FN1. Interacts with ADAM12. Interacts with MLLT10; the interaction enhances MLLT10 in vitro transcriptional activity and self-association. Interacts with MSTN (By similarity).</text>
</comment>
<comment type="subcellular location">
    <subcellularLocation>
        <location evidence="1">Secreted</location>
    </subcellularLocation>
    <subcellularLocation>
        <location evidence="1">Nucleus</location>
    </subcellularLocation>
</comment>
<comment type="tissue specificity">
    <text evidence="5">Abundantly expressed in heart, lung, kidney and testis. Continuously expressed in embryonic heart.</text>
</comment>
<keyword id="KW-1015">Disulfide bond</keyword>
<keyword id="KW-0325">Glycoprotein</keyword>
<keyword id="KW-0539">Nucleus</keyword>
<keyword id="KW-0892">Osteogenesis</keyword>
<keyword id="KW-1185">Reference proteome</keyword>
<keyword id="KW-0677">Repeat</keyword>
<keyword id="KW-0964">Secreted</keyword>
<keyword id="KW-0732">Signal</keyword>
<keyword id="KW-0804">Transcription</keyword>
<keyword id="KW-0805">Transcription regulation</keyword>
<organism>
    <name type="scientific">Mus musculus</name>
    <name type="common">Mouse</name>
    <dbReference type="NCBI Taxonomy" id="10090"/>
    <lineage>
        <taxon>Eukaryota</taxon>
        <taxon>Metazoa</taxon>
        <taxon>Chordata</taxon>
        <taxon>Craniata</taxon>
        <taxon>Vertebrata</taxon>
        <taxon>Euteleostomi</taxon>
        <taxon>Mammalia</taxon>
        <taxon>Eutheria</taxon>
        <taxon>Euarchontoglires</taxon>
        <taxon>Glires</taxon>
        <taxon>Rodentia</taxon>
        <taxon>Myomorpha</taxon>
        <taxon>Muroidea</taxon>
        <taxon>Muridae</taxon>
        <taxon>Murinae</taxon>
        <taxon>Mus</taxon>
        <taxon>Mus</taxon>
    </lineage>
</organism>
<evidence type="ECO:0000250" key="1"/>
<evidence type="ECO:0000255" key="2"/>
<evidence type="ECO:0000255" key="3">
    <source>
        <dbReference type="PROSITE-ProRule" id="PRU00697"/>
    </source>
</evidence>
<evidence type="ECO:0000255" key="4">
    <source>
        <dbReference type="PROSITE-ProRule" id="PRU00798"/>
    </source>
</evidence>
<evidence type="ECO:0000269" key="5">
    <source>
    </source>
</evidence>
<feature type="signal peptide" evidence="2">
    <location>
        <begin position="1"/>
        <end position="23"/>
    </location>
</feature>
<feature type="chain" id="PRO_0000010116" description="Follistatin-related protein 3">
    <location>
        <begin position="24"/>
        <end position="256"/>
    </location>
</feature>
<feature type="domain" description="TB" evidence="3">
    <location>
        <begin position="34"/>
        <end position="105"/>
    </location>
</feature>
<feature type="domain" description="Follistatin-like 1">
    <location>
        <begin position="97"/>
        <end position="117"/>
    </location>
</feature>
<feature type="domain" description="Kazal-like 1" evidence="4">
    <location>
        <begin position="111"/>
        <end position="167"/>
    </location>
</feature>
<feature type="domain" description="Follistatin-like 2">
    <location>
        <begin position="168"/>
        <end position="191"/>
    </location>
</feature>
<feature type="domain" description="Kazal-like 2" evidence="4">
    <location>
        <begin position="187"/>
        <end position="243"/>
    </location>
</feature>
<feature type="glycosylation site" description="N-linked (GlcNAc...) asparagine" evidence="2">
    <location>
        <position position="71"/>
    </location>
</feature>
<feature type="glycosylation site" description="N-linked (GlcNAc...) asparagine" evidence="2">
    <location>
        <position position="213"/>
    </location>
</feature>
<feature type="disulfide bond" evidence="3">
    <location>
        <begin position="36"/>
        <end position="59"/>
    </location>
</feature>
<feature type="disulfide bond" evidence="3">
    <location>
        <begin position="46"/>
        <end position="90"/>
    </location>
</feature>
<feature type="disulfide bond" evidence="3">
    <location>
        <begin position="60"/>
        <end position="93"/>
    </location>
</feature>
<feature type="disulfide bond" evidence="4">
    <location>
        <begin position="97"/>
        <end position="108"/>
    </location>
</feature>
<feature type="disulfide bond" evidence="4">
    <location>
        <begin position="102"/>
        <end position="117"/>
    </location>
</feature>
<feature type="disulfide bond" evidence="4">
    <location>
        <begin position="119"/>
        <end position="151"/>
    </location>
</feature>
<feature type="disulfide bond" evidence="4">
    <location>
        <begin position="123"/>
        <end position="144"/>
    </location>
</feature>
<feature type="disulfide bond" evidence="4">
    <location>
        <begin position="133"/>
        <end position="165"/>
    </location>
</feature>
<feature type="disulfide bond" evidence="4">
    <location>
        <begin position="193"/>
        <end position="227"/>
    </location>
</feature>
<feature type="disulfide bond" evidence="4">
    <location>
        <begin position="198"/>
        <end position="220"/>
    </location>
</feature>
<feature type="disulfide bond" evidence="4">
    <location>
        <begin position="209"/>
        <end position="241"/>
    </location>
</feature>
<gene>
    <name type="primary">Fstl3</name>
    <name type="synonym">Flrg</name>
</gene>
<dbReference type="EMBL" id="AF276238">
    <property type="protein sequence ID" value="AAG47666.1"/>
    <property type="molecule type" value="mRNA"/>
</dbReference>
<dbReference type="EMBL" id="AB024429">
    <property type="protein sequence ID" value="BAB32663.1"/>
    <property type="molecule type" value="mRNA"/>
</dbReference>
<dbReference type="EMBL" id="AF310616">
    <property type="protein sequence ID" value="AAG53666.1"/>
    <property type="molecule type" value="mRNA"/>
</dbReference>
<dbReference type="EMBL" id="BC061052">
    <property type="protein sequence ID" value="AAH61052.1"/>
    <property type="molecule type" value="mRNA"/>
</dbReference>
<dbReference type="CCDS" id="CCDS23990.1"/>
<dbReference type="RefSeq" id="NP_113557.1">
    <property type="nucleotide sequence ID" value="NM_031380.2"/>
</dbReference>
<dbReference type="SMR" id="Q9EQC7"/>
<dbReference type="CORUM" id="Q9EQC7"/>
<dbReference type="FunCoup" id="Q9EQC7">
    <property type="interactions" value="70"/>
</dbReference>
<dbReference type="STRING" id="10090.ENSMUSP00000020575"/>
<dbReference type="MEROPS" id="I01.968"/>
<dbReference type="GlyCosmos" id="Q9EQC7">
    <property type="glycosylation" value="2 sites, No reported glycans"/>
</dbReference>
<dbReference type="GlyGen" id="Q9EQC7">
    <property type="glycosylation" value="2 sites"/>
</dbReference>
<dbReference type="PhosphoSitePlus" id="Q9EQC7"/>
<dbReference type="PaxDb" id="10090-ENSMUSP00000020575"/>
<dbReference type="ProteomicsDB" id="266874"/>
<dbReference type="Antibodypedia" id="22353">
    <property type="antibodies" value="240 antibodies from 26 providers"/>
</dbReference>
<dbReference type="DNASU" id="83554"/>
<dbReference type="Ensembl" id="ENSMUST00000020575.5">
    <property type="protein sequence ID" value="ENSMUSP00000020575.5"/>
    <property type="gene ID" value="ENSMUSG00000020325.11"/>
</dbReference>
<dbReference type="GeneID" id="83554"/>
<dbReference type="KEGG" id="mmu:83554"/>
<dbReference type="UCSC" id="uc007fzs.2">
    <property type="organism name" value="mouse"/>
</dbReference>
<dbReference type="AGR" id="MGI:1890391"/>
<dbReference type="CTD" id="10272"/>
<dbReference type="MGI" id="MGI:1890391">
    <property type="gene designation" value="Fstl3"/>
</dbReference>
<dbReference type="VEuPathDB" id="HostDB:ENSMUSG00000020325"/>
<dbReference type="eggNOG" id="KOG3649">
    <property type="taxonomic scope" value="Eukaryota"/>
</dbReference>
<dbReference type="GeneTree" id="ENSGT00940000161332"/>
<dbReference type="HOGENOM" id="CLU_050745_1_0_1"/>
<dbReference type="InParanoid" id="Q9EQC7"/>
<dbReference type="OMA" id="HGGICWL"/>
<dbReference type="OrthoDB" id="6614329at2759"/>
<dbReference type="PhylomeDB" id="Q9EQC7"/>
<dbReference type="TreeFam" id="TF106409"/>
<dbReference type="Reactome" id="R-MMU-2473224">
    <property type="pathway name" value="Antagonism of Activin by Follistatin"/>
</dbReference>
<dbReference type="Reactome" id="R-MMU-381426">
    <property type="pathway name" value="Regulation of Insulin-like Growth Factor (IGF) transport and uptake by Insulin-like Growth Factor Binding Proteins (IGFBPs)"/>
</dbReference>
<dbReference type="Reactome" id="R-MMU-8957275">
    <property type="pathway name" value="Post-translational protein phosphorylation"/>
</dbReference>
<dbReference type="BioGRID-ORCS" id="83554">
    <property type="hits" value="2 hits in 83 CRISPR screens"/>
</dbReference>
<dbReference type="PRO" id="PR:Q9EQC7"/>
<dbReference type="Proteomes" id="UP000000589">
    <property type="component" value="Chromosome 10"/>
</dbReference>
<dbReference type="RNAct" id="Q9EQC7">
    <property type="molecule type" value="protein"/>
</dbReference>
<dbReference type="Bgee" id="ENSMUSG00000020325">
    <property type="expression patterns" value="Expressed in ectoplacental cone and 124 other cell types or tissues"/>
</dbReference>
<dbReference type="ExpressionAtlas" id="Q9EQC7">
    <property type="expression patterns" value="baseline and differential"/>
</dbReference>
<dbReference type="GO" id="GO:0005615">
    <property type="term" value="C:extracellular space"/>
    <property type="evidence" value="ECO:0000314"/>
    <property type="project" value="MGI"/>
</dbReference>
<dbReference type="GO" id="GO:0005654">
    <property type="term" value="C:nucleoplasm"/>
    <property type="evidence" value="ECO:0007669"/>
    <property type="project" value="Ensembl"/>
</dbReference>
<dbReference type="GO" id="GO:0048185">
    <property type="term" value="F:activin binding"/>
    <property type="evidence" value="ECO:0000314"/>
    <property type="project" value="MGI"/>
</dbReference>
<dbReference type="GO" id="GO:0001968">
    <property type="term" value="F:fibronectin binding"/>
    <property type="evidence" value="ECO:0007669"/>
    <property type="project" value="Ensembl"/>
</dbReference>
<dbReference type="GO" id="GO:0002244">
    <property type="term" value="P:hematopoietic progenitor cell differentiation"/>
    <property type="evidence" value="ECO:0007669"/>
    <property type="project" value="Ensembl"/>
</dbReference>
<dbReference type="GO" id="GO:0032926">
    <property type="term" value="P:negative regulation of activin receptor signaling pathway"/>
    <property type="evidence" value="ECO:0007669"/>
    <property type="project" value="Ensembl"/>
</dbReference>
<dbReference type="GO" id="GO:0030514">
    <property type="term" value="P:negative regulation of BMP signaling pathway"/>
    <property type="evidence" value="ECO:0000314"/>
    <property type="project" value="MGI"/>
</dbReference>
<dbReference type="GO" id="GO:0045671">
    <property type="term" value="P:negative regulation of osteoclast differentiation"/>
    <property type="evidence" value="ECO:0007669"/>
    <property type="project" value="Ensembl"/>
</dbReference>
<dbReference type="GO" id="GO:0001503">
    <property type="term" value="P:ossification"/>
    <property type="evidence" value="ECO:0007669"/>
    <property type="project" value="UniProtKB-KW"/>
</dbReference>
<dbReference type="GO" id="GO:0022409">
    <property type="term" value="P:positive regulation of cell-cell adhesion"/>
    <property type="evidence" value="ECO:0007669"/>
    <property type="project" value="Ensembl"/>
</dbReference>
<dbReference type="GO" id="GO:0045944">
    <property type="term" value="P:positive regulation of transcription by RNA polymerase II"/>
    <property type="evidence" value="ECO:0007669"/>
    <property type="project" value="Ensembl"/>
</dbReference>
<dbReference type="CDD" id="cd00104">
    <property type="entry name" value="KAZAL_FS"/>
    <property type="match status" value="1"/>
</dbReference>
<dbReference type="FunFam" id="3.30.60.30:FF:000025">
    <property type="entry name" value="Follistatin-related protein 3"/>
    <property type="match status" value="1"/>
</dbReference>
<dbReference type="FunFam" id="3.30.60.30:FF:000028">
    <property type="entry name" value="Follistatin-related protein 3"/>
    <property type="match status" value="1"/>
</dbReference>
<dbReference type="FunFam" id="3.90.290.10:FF:000021">
    <property type="entry name" value="follistatin-related protein 3"/>
    <property type="match status" value="1"/>
</dbReference>
<dbReference type="Gene3D" id="3.30.60.30">
    <property type="match status" value="2"/>
</dbReference>
<dbReference type="Gene3D" id="3.90.290.10">
    <property type="entry name" value="TGF-beta binding (TB) domain"/>
    <property type="match status" value="1"/>
</dbReference>
<dbReference type="InterPro" id="IPR003645">
    <property type="entry name" value="Fol_N"/>
</dbReference>
<dbReference type="InterPro" id="IPR015369">
    <property type="entry name" value="Follistatin/Osteonectin_EGF"/>
</dbReference>
<dbReference type="InterPro" id="IPR002350">
    <property type="entry name" value="Kazal_dom"/>
</dbReference>
<dbReference type="InterPro" id="IPR036058">
    <property type="entry name" value="Kazal_dom_sf"/>
</dbReference>
<dbReference type="InterPro" id="IPR050653">
    <property type="entry name" value="Prot_Inhib_GrowthFact_Antg"/>
</dbReference>
<dbReference type="InterPro" id="IPR017878">
    <property type="entry name" value="TB_dom"/>
</dbReference>
<dbReference type="InterPro" id="IPR036773">
    <property type="entry name" value="TB_dom_sf"/>
</dbReference>
<dbReference type="PANTHER" id="PTHR10913:SF45">
    <property type="entry name" value="FOLLISTATIN, ISOFORM A-RELATED"/>
    <property type="match status" value="1"/>
</dbReference>
<dbReference type="PANTHER" id="PTHR10913">
    <property type="entry name" value="FOLLISTATIN-RELATED"/>
    <property type="match status" value="1"/>
</dbReference>
<dbReference type="Pfam" id="PF09289">
    <property type="entry name" value="FOLN"/>
    <property type="match status" value="1"/>
</dbReference>
<dbReference type="Pfam" id="PF21333">
    <property type="entry name" value="FST_N"/>
    <property type="match status" value="1"/>
</dbReference>
<dbReference type="Pfam" id="PF07648">
    <property type="entry name" value="Kazal_2"/>
    <property type="match status" value="2"/>
</dbReference>
<dbReference type="SMART" id="SM00274">
    <property type="entry name" value="FOLN"/>
    <property type="match status" value="2"/>
</dbReference>
<dbReference type="SMART" id="SM00280">
    <property type="entry name" value="KAZAL"/>
    <property type="match status" value="2"/>
</dbReference>
<dbReference type="SUPFAM" id="SSF100895">
    <property type="entry name" value="Kazal-type serine protease inhibitors"/>
    <property type="match status" value="2"/>
</dbReference>
<dbReference type="SUPFAM" id="SSF57581">
    <property type="entry name" value="TB module/8-cys domain"/>
    <property type="match status" value="1"/>
</dbReference>
<dbReference type="PROSITE" id="PS51465">
    <property type="entry name" value="KAZAL_2"/>
    <property type="match status" value="2"/>
</dbReference>
<dbReference type="PROSITE" id="PS51364">
    <property type="entry name" value="TB"/>
    <property type="match status" value="1"/>
</dbReference>
<proteinExistence type="evidence at protein level"/>
<protein>
    <recommendedName>
        <fullName>Follistatin-related protein 3</fullName>
    </recommendedName>
    <alternativeName>
        <fullName>Follistatin-like protein 3</fullName>
    </alternativeName>
    <alternativeName>
        <fullName>Follistatin-related gene protein</fullName>
    </alternativeName>
</protein>
<reference key="1">
    <citation type="journal article" date="2000" name="J. Biol. Chem.">
        <title>Identification and characterization of a novel follistatin-like protein as a binding protein for the TGF-beta family.</title>
        <authorList>
            <person name="Tsuchida K."/>
            <person name="Arai K.Y."/>
            <person name="Kuramoto Y."/>
            <person name="Yamakawa N."/>
            <person name="Hasegawa Y."/>
            <person name="Sugino H."/>
        </authorList>
    </citation>
    <scope>NUCLEOTIDE SEQUENCE [MRNA]</scope>
    <scope>INTERACTION WITH INHBA</scope>
    <source>
        <strain>C57BL/6J</strain>
    </source>
</reference>
<reference key="2">
    <citation type="submission" date="1999-03" db="EMBL/GenBank/DDBJ databases">
        <title>Mouse follistatin-related protein FLRG (mouse PCTF35, PC12 cell derived trophic factor 35).</title>
        <authorList>
            <person name="Uchiyama Y."/>
            <person name="Ohsawa Y."/>
            <person name="Kametaka S."/>
        </authorList>
    </citation>
    <scope>NUCLEOTIDE SEQUENCE [MRNA]</scope>
</reference>
<reference key="3">
    <citation type="journal article" date="2001" name="Endocrinology">
        <title>Human follistatin-related protein: a structural homologue of follistatin with nuclear localization.</title>
        <authorList>
            <person name="Tortoriello D.V."/>
            <person name="Sidis Y."/>
            <person name="Holtzman D.A."/>
            <person name="Holmes W.E."/>
            <person name="Schneyer A.L."/>
        </authorList>
    </citation>
    <scope>NUCLEOTIDE SEQUENCE [MRNA]</scope>
</reference>
<reference key="4">
    <citation type="journal article" date="2004" name="Genome Res.">
        <title>The status, quality, and expansion of the NIH full-length cDNA project: the Mammalian Gene Collection (MGC).</title>
        <authorList>
            <consortium name="The MGC Project Team"/>
        </authorList>
    </citation>
    <scope>NUCLEOTIDE SEQUENCE [LARGE SCALE MRNA]</scope>
    <source>
        <tissue>Kidney</tissue>
    </source>
</reference>
<reference key="5">
    <citation type="journal article" date="2007" name="J. Med. Invest.">
        <title>Characterization of follistatin-related gene as a negative regulatory factor for activin family members during mouse heart development.</title>
        <authorList>
            <person name="Takehara-Kasamatsu Y."/>
            <person name="Tsuchida K."/>
            <person name="Nakatani M."/>
            <person name="Murakami T."/>
            <person name="Kurisaki A."/>
            <person name="Hashimoto O."/>
            <person name="Ohuchi H."/>
            <person name="Kurose H."/>
            <person name="Mori K."/>
            <person name="Kagami S."/>
            <person name="Noji S."/>
            <person name="Sugino H."/>
        </authorList>
    </citation>
    <scope>TISSUE SPECIFICITY</scope>
</reference>
<sequence length="256" mass="27271">MRSGALWPLLWGALVWTVGSVGAVMGSEDSVPGGVCWLQQGREATCSLVLKTRVSREECCASGNINTAWSNFTHPGNKISLLGFLGLVHCLPCKDSCDGVECGPGKACRMLGGRPHCECVPNCEGLPAGFQVCGSDGATYRDECELRTARCRGHPDLRVMYRGRCQKSCAQVVCPRPQSCLVDQTGSAHCVVCRAAPCPVPSNPGQELCGNNNVTYISSCHLRQATCFLGRSIGVRHPGICTGGPKVPAEEEENFV</sequence>
<accession>Q9EQC7</accession>
<name>FSTL3_MOUSE</name>